<organism>
    <name type="scientific">Psilotum nudum</name>
    <name type="common">Whisk fern</name>
    <name type="synonym">Lycopodium nudum</name>
    <dbReference type="NCBI Taxonomy" id="3240"/>
    <lineage>
        <taxon>Eukaryota</taxon>
        <taxon>Viridiplantae</taxon>
        <taxon>Streptophyta</taxon>
        <taxon>Embryophyta</taxon>
        <taxon>Tracheophyta</taxon>
        <taxon>Polypodiopsida</taxon>
        <taxon>Ophioglossidae</taxon>
        <taxon>Psilotales</taxon>
        <taxon>Psilotaceae</taxon>
        <taxon>Psilotum</taxon>
    </lineage>
</organism>
<keyword id="KW-0004">4Fe-4S</keyword>
<keyword id="KW-0148">Chlorophyll</keyword>
<keyword id="KW-0150">Chloroplast</keyword>
<keyword id="KW-0157">Chromophore</keyword>
<keyword id="KW-0249">Electron transport</keyword>
<keyword id="KW-0408">Iron</keyword>
<keyword id="KW-0411">Iron-sulfur</keyword>
<keyword id="KW-0460">Magnesium</keyword>
<keyword id="KW-0472">Membrane</keyword>
<keyword id="KW-0479">Metal-binding</keyword>
<keyword id="KW-0560">Oxidoreductase</keyword>
<keyword id="KW-0602">Photosynthesis</keyword>
<keyword id="KW-0603">Photosystem I</keyword>
<keyword id="KW-0934">Plastid</keyword>
<keyword id="KW-0793">Thylakoid</keyword>
<keyword id="KW-0812">Transmembrane</keyword>
<keyword id="KW-1133">Transmembrane helix</keyword>
<keyword id="KW-0813">Transport</keyword>
<name>PSAB_PSINU</name>
<accession>P58765</accession>
<sequence>MAPRFPKFSQGLAQDPTTRRIWFGIATAHDFESHDDITEERLYQKIFASHFGQLTVIFLWTSGNLFHVAWQGNFEAWVQDPLHVRPIAHAIWDPHFGQPAVEAYTRGGASGPVNIAYSGVYQWWYTIGLRTNQDLYTGAIFLLALSALFLIAGWLHLQPGWKPGLSWFKNAESRLNHHLSGLFGVSSLAWAGHLVHVAIPESRGEHVRWQNLLTALPHPRGLEPFFSGQWSIYAQNPDSTNHFFGTTQGAGTAILTFLGGFHPQTQSLWLTDIAHHHLAIAVVFIIAGHMYRTNFGIGHSIKEILEAHTPPGGRLGRGHKGLYDTINNSLHFQLGLALAALGVITSLVAQHMYSLPAYAYIAQDFTTQAALYTHHQYIAGFLMTGAFAHGAIFFIRDYNPEQNKDNVLARMLEHKEAIISHLSWASLFLGFHTLGLYVHNDAMLAFGTPEKQILIEPVFAQWIQATHGKALYGFDVLLSSANSPAFNAGQSLWLPGWLDAINNNSNSLFLTIGPGDFLVHHAIALGLHTTTLILVKGALDARGSKLMPDKKEFGYSFPCDGPGRGGTCDISAWDAFYLAVFWMLNTIGWVTFYWHWKHITLWQGNVAQFNESSTYLMGWLRDYLWLNSSQLINGYNPFGMNSLSVWAWMFLFGHLVWAIGFMFLISWRGYWQELIETLAWAHERTPLANLVRWKDKPVALSIVQARLVGLAHFSVGYIFTYAAFLIASTSGKFG</sequence>
<dbReference type="EC" id="1.97.1.12" evidence="1"/>
<dbReference type="EMBL" id="AP004638">
    <property type="protein sequence ID" value="BAB84215.1"/>
    <property type="molecule type" value="Genomic_DNA"/>
</dbReference>
<dbReference type="RefSeq" id="NP_569628.1">
    <property type="nucleotide sequence ID" value="NC_003386.1"/>
</dbReference>
<dbReference type="SMR" id="P58765"/>
<dbReference type="GeneID" id="2545134"/>
<dbReference type="GO" id="GO:0009535">
    <property type="term" value="C:chloroplast thylakoid membrane"/>
    <property type="evidence" value="ECO:0007669"/>
    <property type="project" value="UniProtKB-SubCell"/>
</dbReference>
<dbReference type="GO" id="GO:0009522">
    <property type="term" value="C:photosystem I"/>
    <property type="evidence" value="ECO:0007669"/>
    <property type="project" value="UniProtKB-KW"/>
</dbReference>
<dbReference type="GO" id="GO:0051539">
    <property type="term" value="F:4 iron, 4 sulfur cluster binding"/>
    <property type="evidence" value="ECO:0007669"/>
    <property type="project" value="UniProtKB-KW"/>
</dbReference>
<dbReference type="GO" id="GO:0016168">
    <property type="term" value="F:chlorophyll binding"/>
    <property type="evidence" value="ECO:0007669"/>
    <property type="project" value="UniProtKB-KW"/>
</dbReference>
<dbReference type="GO" id="GO:0009055">
    <property type="term" value="F:electron transfer activity"/>
    <property type="evidence" value="ECO:0007669"/>
    <property type="project" value="UniProtKB-UniRule"/>
</dbReference>
<dbReference type="GO" id="GO:0000287">
    <property type="term" value="F:magnesium ion binding"/>
    <property type="evidence" value="ECO:0007669"/>
    <property type="project" value="UniProtKB-UniRule"/>
</dbReference>
<dbReference type="GO" id="GO:0016491">
    <property type="term" value="F:oxidoreductase activity"/>
    <property type="evidence" value="ECO:0007669"/>
    <property type="project" value="UniProtKB-KW"/>
</dbReference>
<dbReference type="GO" id="GO:0015979">
    <property type="term" value="P:photosynthesis"/>
    <property type="evidence" value="ECO:0007669"/>
    <property type="project" value="UniProtKB-UniRule"/>
</dbReference>
<dbReference type="FunFam" id="1.20.1130.10:FF:000001">
    <property type="entry name" value="Photosystem I P700 chlorophyll a apoprotein A2"/>
    <property type="match status" value="1"/>
</dbReference>
<dbReference type="Gene3D" id="1.20.1130.10">
    <property type="entry name" value="Photosystem I PsaA/PsaB"/>
    <property type="match status" value="1"/>
</dbReference>
<dbReference type="HAMAP" id="MF_00482">
    <property type="entry name" value="PSI_PsaB"/>
    <property type="match status" value="1"/>
</dbReference>
<dbReference type="InterPro" id="IPR001280">
    <property type="entry name" value="PSI_PsaA/B"/>
</dbReference>
<dbReference type="InterPro" id="IPR020586">
    <property type="entry name" value="PSI_PsaA/B_CS"/>
</dbReference>
<dbReference type="InterPro" id="IPR036408">
    <property type="entry name" value="PSI_PsaA/B_sf"/>
</dbReference>
<dbReference type="InterPro" id="IPR006244">
    <property type="entry name" value="PSI_PsaB"/>
</dbReference>
<dbReference type="NCBIfam" id="TIGR01336">
    <property type="entry name" value="psaB"/>
    <property type="match status" value="1"/>
</dbReference>
<dbReference type="PANTHER" id="PTHR30128">
    <property type="entry name" value="OUTER MEMBRANE PROTEIN, OMPA-RELATED"/>
    <property type="match status" value="1"/>
</dbReference>
<dbReference type="PANTHER" id="PTHR30128:SF19">
    <property type="entry name" value="PHOTOSYSTEM I P700 CHLOROPHYLL A APOPROTEIN A1-RELATED"/>
    <property type="match status" value="1"/>
</dbReference>
<dbReference type="Pfam" id="PF00223">
    <property type="entry name" value="PsaA_PsaB"/>
    <property type="match status" value="1"/>
</dbReference>
<dbReference type="PIRSF" id="PIRSF002905">
    <property type="entry name" value="PSI_A"/>
    <property type="match status" value="1"/>
</dbReference>
<dbReference type="PRINTS" id="PR00257">
    <property type="entry name" value="PHOTSYSPSAAB"/>
</dbReference>
<dbReference type="SUPFAM" id="SSF81558">
    <property type="entry name" value="Photosystem I subunits PsaA/PsaB"/>
    <property type="match status" value="1"/>
</dbReference>
<dbReference type="PROSITE" id="PS00419">
    <property type="entry name" value="PHOTOSYSTEM_I_PSAAB"/>
    <property type="match status" value="1"/>
</dbReference>
<protein>
    <recommendedName>
        <fullName evidence="1">Photosystem I P700 chlorophyll a apoprotein A2</fullName>
        <ecNumber evidence="1">1.97.1.12</ecNumber>
    </recommendedName>
    <alternativeName>
        <fullName evidence="1">PSI-B</fullName>
    </alternativeName>
    <alternativeName>
        <fullName evidence="1">PsaB</fullName>
    </alternativeName>
</protein>
<evidence type="ECO:0000255" key="1">
    <source>
        <dbReference type="HAMAP-Rule" id="MF_00482"/>
    </source>
</evidence>
<feature type="chain" id="PRO_0000088635" description="Photosystem I P700 chlorophyll a apoprotein A2">
    <location>
        <begin position="1"/>
        <end position="734"/>
    </location>
</feature>
<feature type="transmembrane region" description="Helical; Name=I" evidence="1">
    <location>
        <begin position="46"/>
        <end position="69"/>
    </location>
</feature>
<feature type="transmembrane region" description="Helical; Name=II" evidence="1">
    <location>
        <begin position="135"/>
        <end position="158"/>
    </location>
</feature>
<feature type="transmembrane region" description="Helical; Name=III" evidence="1">
    <location>
        <begin position="175"/>
        <end position="199"/>
    </location>
</feature>
<feature type="transmembrane region" description="Helical; Name=IV" evidence="1">
    <location>
        <begin position="273"/>
        <end position="291"/>
    </location>
</feature>
<feature type="transmembrane region" description="Helical; Name=V" evidence="1">
    <location>
        <begin position="330"/>
        <end position="353"/>
    </location>
</feature>
<feature type="transmembrane region" description="Helical; Name=VI" evidence="1">
    <location>
        <begin position="369"/>
        <end position="395"/>
    </location>
</feature>
<feature type="transmembrane region" description="Helical; Name=VII" evidence="1">
    <location>
        <begin position="417"/>
        <end position="439"/>
    </location>
</feature>
<feature type="transmembrane region" description="Helical; Name=VIII" evidence="1">
    <location>
        <begin position="517"/>
        <end position="535"/>
    </location>
</feature>
<feature type="transmembrane region" description="Helical; Name=IX" evidence="1">
    <location>
        <begin position="575"/>
        <end position="596"/>
    </location>
</feature>
<feature type="transmembrane region" description="Helical; Name=X" evidence="1">
    <location>
        <begin position="643"/>
        <end position="665"/>
    </location>
</feature>
<feature type="transmembrane region" description="Helical; Name=XI" evidence="1">
    <location>
        <begin position="707"/>
        <end position="727"/>
    </location>
</feature>
<feature type="binding site" evidence="1">
    <location>
        <position position="559"/>
    </location>
    <ligand>
        <name>[4Fe-4S] cluster</name>
        <dbReference type="ChEBI" id="CHEBI:49883"/>
        <note>ligand shared between dimeric partners</note>
    </ligand>
</feature>
<feature type="binding site" evidence="1">
    <location>
        <position position="568"/>
    </location>
    <ligand>
        <name>[4Fe-4S] cluster</name>
        <dbReference type="ChEBI" id="CHEBI:49883"/>
        <note>ligand shared between dimeric partners</note>
    </ligand>
</feature>
<feature type="binding site" description="axial binding residue" evidence="1">
    <location>
        <position position="654"/>
    </location>
    <ligand>
        <name>chlorophyll a</name>
        <dbReference type="ChEBI" id="CHEBI:58416"/>
        <label>B1</label>
    </ligand>
    <ligandPart>
        <name>Mg</name>
        <dbReference type="ChEBI" id="CHEBI:25107"/>
    </ligandPart>
</feature>
<feature type="binding site" description="axial binding residue" evidence="1">
    <location>
        <position position="662"/>
    </location>
    <ligand>
        <name>chlorophyll a</name>
        <dbReference type="ChEBI" id="CHEBI:58416"/>
        <label>B3</label>
    </ligand>
    <ligandPart>
        <name>Mg</name>
        <dbReference type="ChEBI" id="CHEBI:25107"/>
    </ligandPart>
</feature>
<feature type="binding site" evidence="1">
    <location>
        <position position="670"/>
    </location>
    <ligand>
        <name>chlorophyll a</name>
        <dbReference type="ChEBI" id="CHEBI:58416"/>
        <label>B3</label>
    </ligand>
</feature>
<feature type="binding site" evidence="1">
    <location>
        <position position="671"/>
    </location>
    <ligand>
        <name>phylloquinone</name>
        <dbReference type="ChEBI" id="CHEBI:18067"/>
        <label>B</label>
    </ligand>
</feature>
<reference key="1">
    <citation type="journal article" date="2004" name="Mol. Biol. Evol.">
        <title>Chloroplast phylogeny indicates that bryophytes are monophyletic.</title>
        <authorList>
            <person name="Nishiyama T."/>
            <person name="Wolf P.G."/>
            <person name="Kugita M."/>
            <person name="Sinclair R.B."/>
            <person name="Sugita M."/>
            <person name="Sugiura C."/>
            <person name="Wakasugi T."/>
            <person name="Yamada K."/>
            <person name="Yoshinaga K."/>
            <person name="Yamaguchi K."/>
            <person name="Ueda K."/>
            <person name="Hasebe M."/>
        </authorList>
    </citation>
    <scope>NUCLEOTIDE SEQUENCE [LARGE SCALE GENOMIC DNA]</scope>
    <source>
        <strain>Kingyoku</strain>
    </source>
</reference>
<proteinExistence type="inferred from homology"/>
<gene>
    <name evidence="1" type="primary">psaB</name>
</gene>
<comment type="function">
    <text evidence="1">PsaA and PsaB bind P700, the primary electron donor of photosystem I (PSI), as well as the electron acceptors A0, A1 and FX. PSI is a plastocyanin-ferredoxin oxidoreductase, converting photonic excitation into a charge separation, which transfers an electron from the donor P700 chlorophyll pair to the spectroscopically characterized acceptors A0, A1, FX, FA and FB in turn. Oxidized P700 is reduced on the lumenal side of the thylakoid membrane by plastocyanin.</text>
</comment>
<comment type="catalytic activity">
    <reaction evidence="1">
        <text>reduced [plastocyanin] + hnu + oxidized [2Fe-2S]-[ferredoxin] = oxidized [plastocyanin] + reduced [2Fe-2S]-[ferredoxin]</text>
        <dbReference type="Rhea" id="RHEA:30407"/>
        <dbReference type="Rhea" id="RHEA-COMP:10000"/>
        <dbReference type="Rhea" id="RHEA-COMP:10001"/>
        <dbReference type="Rhea" id="RHEA-COMP:10039"/>
        <dbReference type="Rhea" id="RHEA-COMP:10040"/>
        <dbReference type="ChEBI" id="CHEBI:29036"/>
        <dbReference type="ChEBI" id="CHEBI:30212"/>
        <dbReference type="ChEBI" id="CHEBI:33737"/>
        <dbReference type="ChEBI" id="CHEBI:33738"/>
        <dbReference type="ChEBI" id="CHEBI:49552"/>
        <dbReference type="EC" id="1.97.1.12"/>
    </reaction>
</comment>
<comment type="cofactor">
    <text evidence="1">P700 is a chlorophyll a/chlorophyll a' dimer, A0 is one or more chlorophyll a, A1 is one or both phylloquinones and FX is a shared 4Fe-4S iron-sulfur center.</text>
</comment>
<comment type="subunit">
    <text evidence="1">The PsaA/B heterodimer binds the P700 chlorophyll special pair and subsequent electron acceptors. PSI consists of a core antenna complex that captures photons, and an electron transfer chain that converts photonic excitation into a charge separation. The eukaryotic PSI reaction center is composed of at least 11 subunits.</text>
</comment>
<comment type="subcellular location">
    <subcellularLocation>
        <location evidence="1">Plastid</location>
        <location evidence="1">Chloroplast thylakoid membrane</location>
        <topology evidence="1">Multi-pass membrane protein</topology>
    </subcellularLocation>
</comment>
<comment type="similarity">
    <text evidence="1">Belongs to the PsaA/PsaB family.</text>
</comment>
<geneLocation type="chloroplast"/>